<proteinExistence type="evidence at protein level"/>
<evidence type="ECO:0000250" key="1">
    <source>
        <dbReference type="UniProtKB" id="Q9FL28"/>
    </source>
</evidence>
<evidence type="ECO:0000255" key="2"/>
<evidence type="ECO:0000255" key="3">
    <source>
        <dbReference type="PROSITE-ProRule" id="PRU00159"/>
    </source>
</evidence>
<evidence type="ECO:0000255" key="4">
    <source>
        <dbReference type="PROSITE-ProRule" id="PRU00498"/>
    </source>
</evidence>
<evidence type="ECO:0000269" key="5">
    <source>
    </source>
</evidence>
<evidence type="ECO:0000269" key="6">
    <source>
    </source>
</evidence>
<evidence type="ECO:0000269" key="7">
    <source>
    </source>
</evidence>
<evidence type="ECO:0000269" key="8">
    <source>
    </source>
</evidence>
<evidence type="ECO:0000303" key="9">
    <source>
    </source>
</evidence>
<evidence type="ECO:0000305" key="10"/>
<evidence type="ECO:0000312" key="11">
    <source>
        <dbReference type="EMBL" id="BAF15808.1"/>
    </source>
</evidence>
<evidence type="ECO:0000312" key="12">
    <source>
        <dbReference type="EMBL" id="EAZ32006.1"/>
    </source>
</evidence>
<evidence type="ECO:0007829" key="13">
    <source>
        <dbReference type="PDB" id="8JUP"/>
    </source>
</evidence>
<name>FLS2_ORYSJ</name>
<keyword id="KW-0002">3D-structure</keyword>
<keyword id="KW-0067">ATP-binding</keyword>
<keyword id="KW-1003">Cell membrane</keyword>
<keyword id="KW-1015">Disulfide bond</keyword>
<keyword id="KW-0325">Glycoprotein</keyword>
<keyword id="KW-0418">Kinase</keyword>
<keyword id="KW-0433">Leucine-rich repeat</keyword>
<keyword id="KW-0472">Membrane</keyword>
<keyword id="KW-0547">Nucleotide-binding</keyword>
<keyword id="KW-0611">Plant defense</keyword>
<keyword id="KW-0675">Receptor</keyword>
<keyword id="KW-1185">Reference proteome</keyword>
<keyword id="KW-0677">Repeat</keyword>
<keyword id="KW-0723">Serine/threonine-protein kinase</keyword>
<keyword id="KW-0732">Signal</keyword>
<keyword id="KW-0808">Transferase</keyword>
<keyword id="KW-0812">Transmembrane</keyword>
<keyword id="KW-1133">Transmembrane helix</keyword>
<feature type="signal peptide" evidence="2">
    <location>
        <begin position="1"/>
        <end position="41"/>
    </location>
</feature>
<feature type="chain" id="PRO_0000441258" description="LRR receptor-like serine/threonine-protein kinase FLS2" evidence="2">
    <location>
        <begin position="42"/>
        <end position="1183"/>
    </location>
</feature>
<feature type="topological domain" description="Extracellular" evidence="10">
    <location>
        <begin position="42"/>
        <end position="809"/>
    </location>
</feature>
<feature type="transmembrane region" description="Helical" evidence="2">
    <location>
        <begin position="810"/>
        <end position="830"/>
    </location>
</feature>
<feature type="topological domain" description="Cytoplasmic" evidence="10">
    <location>
        <begin position="831"/>
        <end position="1183"/>
    </location>
</feature>
<feature type="repeat" description="LRR 1" evidence="2">
    <location>
        <begin position="97"/>
        <end position="120"/>
    </location>
</feature>
<feature type="repeat" description="LRR 2" evidence="2">
    <location>
        <begin position="121"/>
        <end position="145"/>
    </location>
</feature>
<feature type="repeat" description="LRR 3" evidence="2">
    <location>
        <begin position="147"/>
        <end position="169"/>
    </location>
</feature>
<feature type="repeat" description="LRR 4" evidence="2">
    <location>
        <begin position="171"/>
        <end position="193"/>
    </location>
</feature>
<feature type="repeat" description="LRR 5" evidence="2">
    <location>
        <begin position="194"/>
        <end position="217"/>
    </location>
</feature>
<feature type="repeat" description="LRR 6" evidence="2">
    <location>
        <begin position="218"/>
        <end position="241"/>
    </location>
</feature>
<feature type="repeat" description="LRR 7" evidence="2">
    <location>
        <begin position="242"/>
        <end position="265"/>
    </location>
</feature>
<feature type="repeat" description="LRR 8" evidence="2">
    <location>
        <begin position="267"/>
        <end position="289"/>
    </location>
</feature>
<feature type="repeat" description="LRR 9" evidence="2">
    <location>
        <begin position="290"/>
        <end position="313"/>
    </location>
</feature>
<feature type="repeat" description="LRR 10" evidence="2">
    <location>
        <begin position="315"/>
        <end position="337"/>
    </location>
</feature>
<feature type="repeat" description="LRR 11" evidence="2">
    <location>
        <begin position="338"/>
        <end position="361"/>
    </location>
</feature>
<feature type="repeat" description="LRR 12" evidence="2">
    <location>
        <begin position="363"/>
        <end position="385"/>
    </location>
</feature>
<feature type="repeat" description="LRR 13" evidence="2">
    <location>
        <begin position="386"/>
        <end position="409"/>
    </location>
</feature>
<feature type="repeat" description="LRR 14" evidence="2">
    <location>
        <begin position="433"/>
        <end position="457"/>
    </location>
</feature>
<feature type="repeat" description="LRR 15" evidence="2">
    <location>
        <begin position="459"/>
        <end position="480"/>
    </location>
</feature>
<feature type="repeat" description="LRR 16" evidence="2">
    <location>
        <begin position="481"/>
        <end position="505"/>
    </location>
</feature>
<feature type="repeat" description="LRR 17" evidence="2">
    <location>
        <begin position="507"/>
        <end position="529"/>
    </location>
</feature>
<feature type="repeat" description="LRR 18" evidence="2">
    <location>
        <begin position="530"/>
        <end position="553"/>
    </location>
</feature>
<feature type="repeat" description="LRR 19" evidence="2">
    <location>
        <begin position="555"/>
        <end position="577"/>
    </location>
</feature>
<feature type="repeat" description="LRR 20" evidence="2">
    <location>
        <begin position="578"/>
        <end position="600"/>
    </location>
</feature>
<feature type="repeat" description="LRR 21" evidence="2">
    <location>
        <begin position="601"/>
        <end position="625"/>
    </location>
</feature>
<feature type="repeat" description="LRR 22" evidence="2">
    <location>
        <begin position="627"/>
        <end position="651"/>
    </location>
</feature>
<feature type="repeat" description="LRR 23" evidence="2">
    <location>
        <begin position="652"/>
        <end position="675"/>
    </location>
</feature>
<feature type="repeat" description="LRR 24" evidence="2">
    <location>
        <begin position="676"/>
        <end position="699"/>
    </location>
</feature>
<feature type="repeat" description="LRR 25" evidence="2">
    <location>
        <begin position="701"/>
        <end position="724"/>
    </location>
</feature>
<feature type="repeat" description="LRR 26" evidence="2">
    <location>
        <begin position="725"/>
        <end position="748"/>
    </location>
</feature>
<feature type="repeat" description="LRR 27" evidence="2">
    <location>
        <begin position="749"/>
        <end position="773"/>
    </location>
</feature>
<feature type="domain" description="Protein kinase" evidence="3">
    <location>
        <begin position="876"/>
        <end position="1179"/>
    </location>
</feature>
<feature type="active site" description="Proton acceptor" evidence="3">
    <location>
        <position position="1013"/>
    </location>
</feature>
<feature type="binding site" evidence="3">
    <location>
        <begin position="882"/>
        <end position="890"/>
    </location>
    <ligand>
        <name>ATP</name>
        <dbReference type="ChEBI" id="CHEBI:30616"/>
    </ligand>
</feature>
<feature type="binding site" evidence="3">
    <location>
        <position position="908"/>
    </location>
    <ligand>
        <name>ATP</name>
        <dbReference type="ChEBI" id="CHEBI:30616"/>
    </ligand>
</feature>
<feature type="glycosylation site" description="N-linked (GlcNAc...) asparagine" evidence="4">
    <location>
        <position position="88"/>
    </location>
</feature>
<feature type="glycosylation site" description="N-linked (GlcNAc...) asparagine" evidence="4">
    <location>
        <position position="120"/>
    </location>
</feature>
<feature type="glycosylation site" description="N-linked (GlcNAc...) asparagine" evidence="4">
    <location>
        <position position="168"/>
    </location>
</feature>
<feature type="glycosylation site" description="N-linked (GlcNAc...) asparagine" evidence="4">
    <location>
        <position position="181"/>
    </location>
</feature>
<feature type="glycosylation site" description="N-linked (GlcNAc...) asparagine" evidence="4">
    <location>
        <position position="267"/>
    </location>
</feature>
<feature type="glycosylation site" description="N-linked (GlcNAc...) asparagine" evidence="4">
    <location>
        <position position="363"/>
    </location>
</feature>
<feature type="glycosylation site" description="N-linked (GlcNAc...) asparagine" evidence="4">
    <location>
        <position position="395"/>
    </location>
</feature>
<feature type="glycosylation site" description="N-linked (GlcNAc...) asparagine" evidence="4">
    <location>
        <position position="408"/>
    </location>
</feature>
<feature type="glycosylation site" description="N-linked (GlcNAc...) asparagine" evidence="4">
    <location>
        <position position="414"/>
    </location>
</feature>
<feature type="glycosylation site" description="N-linked (GlcNAc...) asparagine" evidence="4">
    <location>
        <position position="483"/>
    </location>
</feature>
<feature type="glycosylation site" description="N-linked (GlcNAc...) asparagine" evidence="4">
    <location>
        <position position="504"/>
    </location>
</feature>
<feature type="glycosylation site" description="N-linked (GlcNAc...) asparagine" evidence="4">
    <location>
        <position position="528"/>
    </location>
</feature>
<feature type="glycosylation site" description="N-linked (GlcNAc...) asparagine" evidence="4">
    <location>
        <position position="591"/>
    </location>
</feature>
<feature type="glycosylation site" description="N-linked (GlcNAc...) asparagine" evidence="4">
    <location>
        <position position="634"/>
    </location>
</feature>
<feature type="glycosylation site" description="N-linked (GlcNAc...) asparagine" evidence="4">
    <location>
        <position position="707"/>
    </location>
</feature>
<feature type="glycosylation site" description="N-linked (GlcNAc...) asparagine" evidence="4">
    <location>
        <position position="747"/>
    </location>
</feature>
<feature type="glycosylation site" description="N-linked (GlcNAc...) asparagine" evidence="4">
    <location>
        <position position="755"/>
    </location>
</feature>
<feature type="glycosylation site" description="N-linked (GlcNAc...) asparagine" evidence="4">
    <location>
        <position position="773"/>
    </location>
</feature>
<feature type="disulfide bond" evidence="1">
    <location>
        <begin position="87"/>
        <end position="94"/>
    </location>
</feature>
<feature type="disulfide bond" evidence="1">
    <location>
        <begin position="167"/>
        <end position="189"/>
    </location>
</feature>
<feature type="sequence conflict" description="In Ref. 5; EAZ32006." evidence="10" ref="5">
    <original>A</original>
    <variation>P</variation>
    <location>
        <position position="1168"/>
    </location>
</feature>
<feature type="strand" evidence="13">
    <location>
        <begin position="862"/>
        <end position="864"/>
    </location>
</feature>
<feature type="helix" evidence="13">
    <location>
        <begin position="866"/>
        <end position="872"/>
    </location>
</feature>
<feature type="turn" evidence="13">
    <location>
        <begin position="873"/>
        <end position="876"/>
    </location>
</feature>
<feature type="helix" evidence="13">
    <location>
        <begin position="878"/>
        <end position="880"/>
    </location>
</feature>
<feature type="strand" evidence="13">
    <location>
        <begin position="881"/>
        <end position="884"/>
    </location>
</feature>
<feature type="strand" evidence="13">
    <location>
        <begin position="886"/>
        <end position="894"/>
    </location>
</feature>
<feature type="strand" evidence="13">
    <location>
        <begin position="904"/>
        <end position="910"/>
    </location>
</feature>
<feature type="turn" evidence="13">
    <location>
        <begin position="912"/>
        <end position="914"/>
    </location>
</feature>
<feature type="helix" evidence="13">
    <location>
        <begin position="916"/>
        <end position="930"/>
    </location>
</feature>
<feature type="strand" evidence="13">
    <location>
        <begin position="941"/>
        <end position="947"/>
    </location>
</feature>
<feature type="turn" evidence="13">
    <location>
        <begin position="948"/>
        <end position="950"/>
    </location>
</feature>
<feature type="strand" evidence="13">
    <location>
        <begin position="951"/>
        <end position="957"/>
    </location>
</feature>
<feature type="helix" evidence="13">
    <location>
        <begin position="964"/>
        <end position="968"/>
    </location>
</feature>
<feature type="helix" evidence="13">
    <location>
        <begin position="984"/>
        <end position="1003"/>
    </location>
</feature>
<feature type="strand" evidence="13">
    <location>
        <begin position="1005"/>
        <end position="1007"/>
    </location>
</feature>
<feature type="helix" evidence="13">
    <location>
        <begin position="1016"/>
        <end position="1018"/>
    </location>
</feature>
<feature type="strand" evidence="13">
    <location>
        <begin position="1019"/>
        <end position="1021"/>
    </location>
</feature>
<feature type="strand" evidence="13">
    <location>
        <begin position="1027"/>
        <end position="1029"/>
    </location>
</feature>
<feature type="helix" evidence="13">
    <location>
        <begin position="1063"/>
        <end position="1065"/>
    </location>
</feature>
<feature type="helix" evidence="13">
    <location>
        <begin position="1068"/>
        <end position="1073"/>
    </location>
</feature>
<feature type="helix" evidence="13">
    <location>
        <begin position="1078"/>
        <end position="1094"/>
    </location>
</feature>
<feature type="helix" evidence="13">
    <location>
        <begin position="1111"/>
        <end position="1120"/>
    </location>
</feature>
<feature type="helix" evidence="13">
    <location>
        <begin position="1122"/>
        <end position="1129"/>
    </location>
</feature>
<feature type="helix" evidence="13">
    <location>
        <begin position="1139"/>
        <end position="1155"/>
    </location>
</feature>
<feature type="helix" evidence="13">
    <location>
        <begin position="1160"/>
        <end position="1162"/>
    </location>
</feature>
<feature type="helix" evidence="13">
    <location>
        <begin position="1166"/>
        <end position="1175"/>
    </location>
</feature>
<reference key="1">
    <citation type="journal article" date="2002" name="Nature">
        <title>Sequence and analysis of rice chromosome 4.</title>
        <authorList>
            <person name="Feng Q."/>
            <person name="Zhang Y."/>
            <person name="Hao P."/>
            <person name="Wang S."/>
            <person name="Fu G."/>
            <person name="Huang Y."/>
            <person name="Li Y."/>
            <person name="Zhu J."/>
            <person name="Liu Y."/>
            <person name="Hu X."/>
            <person name="Jia P."/>
            <person name="Zhang Y."/>
            <person name="Zhao Q."/>
            <person name="Ying K."/>
            <person name="Yu S."/>
            <person name="Tang Y."/>
            <person name="Weng Q."/>
            <person name="Zhang L."/>
            <person name="Lu Y."/>
            <person name="Mu J."/>
            <person name="Lu Y."/>
            <person name="Zhang L.S."/>
            <person name="Yu Z."/>
            <person name="Fan D."/>
            <person name="Liu X."/>
            <person name="Lu T."/>
            <person name="Li C."/>
            <person name="Wu Y."/>
            <person name="Sun T."/>
            <person name="Lei H."/>
            <person name="Li T."/>
            <person name="Hu H."/>
            <person name="Guan J."/>
            <person name="Wu M."/>
            <person name="Zhang R."/>
            <person name="Zhou B."/>
            <person name="Chen Z."/>
            <person name="Chen L."/>
            <person name="Jin Z."/>
            <person name="Wang R."/>
            <person name="Yin H."/>
            <person name="Cai Z."/>
            <person name="Ren S."/>
            <person name="Lv G."/>
            <person name="Gu W."/>
            <person name="Zhu G."/>
            <person name="Tu Y."/>
            <person name="Jia J."/>
            <person name="Zhang Y."/>
            <person name="Chen J."/>
            <person name="Kang H."/>
            <person name="Chen X."/>
            <person name="Shao C."/>
            <person name="Sun Y."/>
            <person name="Hu Q."/>
            <person name="Zhang X."/>
            <person name="Zhang W."/>
            <person name="Wang L."/>
            <person name="Ding C."/>
            <person name="Sheng H."/>
            <person name="Gu J."/>
            <person name="Chen S."/>
            <person name="Ni L."/>
            <person name="Zhu F."/>
            <person name="Chen W."/>
            <person name="Lan L."/>
            <person name="Lai Y."/>
            <person name="Cheng Z."/>
            <person name="Gu M."/>
            <person name="Jiang J."/>
            <person name="Li J."/>
            <person name="Hong G."/>
            <person name="Xue Y."/>
            <person name="Han B."/>
        </authorList>
    </citation>
    <scope>NUCLEOTIDE SEQUENCE [LARGE SCALE GENOMIC DNA]</scope>
    <source>
        <strain>cv. Nipponbare</strain>
    </source>
</reference>
<reference key="2">
    <citation type="journal article" date="2005" name="Nature">
        <title>The map-based sequence of the rice genome.</title>
        <authorList>
            <consortium name="International rice genome sequencing project (IRGSP)"/>
        </authorList>
    </citation>
    <scope>NUCLEOTIDE SEQUENCE [LARGE SCALE GENOMIC DNA]</scope>
    <source>
        <strain>cv. Nipponbare</strain>
    </source>
</reference>
<reference key="3">
    <citation type="journal article" date="2008" name="Nucleic Acids Res.">
        <title>The rice annotation project database (RAP-DB): 2008 update.</title>
        <authorList>
            <consortium name="The rice annotation project (RAP)"/>
        </authorList>
    </citation>
    <scope>GENOME REANNOTATION</scope>
    <source>
        <strain>cv. Nipponbare</strain>
    </source>
</reference>
<reference key="4">
    <citation type="journal article" date="2013" name="Rice">
        <title>Improvement of the Oryza sativa Nipponbare reference genome using next generation sequence and optical map data.</title>
        <authorList>
            <person name="Kawahara Y."/>
            <person name="de la Bastide M."/>
            <person name="Hamilton J.P."/>
            <person name="Kanamori H."/>
            <person name="McCombie W.R."/>
            <person name="Ouyang S."/>
            <person name="Schwartz D.C."/>
            <person name="Tanaka T."/>
            <person name="Wu J."/>
            <person name="Zhou S."/>
            <person name="Childs K.L."/>
            <person name="Davidson R.M."/>
            <person name="Lin H."/>
            <person name="Quesada-Ocampo L."/>
            <person name="Vaillancourt B."/>
            <person name="Sakai H."/>
            <person name="Lee S.S."/>
            <person name="Kim J."/>
            <person name="Numa H."/>
            <person name="Itoh T."/>
            <person name="Buell C.R."/>
            <person name="Matsumoto T."/>
        </authorList>
    </citation>
    <scope>GENOME REANNOTATION</scope>
    <source>
        <strain>cv. Nipponbare</strain>
    </source>
</reference>
<reference key="5">
    <citation type="journal article" date="2005" name="PLoS Biol.">
        <title>The genomes of Oryza sativa: a history of duplications.</title>
        <authorList>
            <person name="Yu J."/>
            <person name="Wang J."/>
            <person name="Lin W."/>
            <person name="Li S."/>
            <person name="Li H."/>
            <person name="Zhou J."/>
            <person name="Ni P."/>
            <person name="Dong W."/>
            <person name="Hu S."/>
            <person name="Zeng C."/>
            <person name="Zhang J."/>
            <person name="Zhang Y."/>
            <person name="Li R."/>
            <person name="Xu Z."/>
            <person name="Li S."/>
            <person name="Li X."/>
            <person name="Zheng H."/>
            <person name="Cong L."/>
            <person name="Lin L."/>
            <person name="Yin J."/>
            <person name="Geng J."/>
            <person name="Li G."/>
            <person name="Shi J."/>
            <person name="Liu J."/>
            <person name="Lv H."/>
            <person name="Li J."/>
            <person name="Wang J."/>
            <person name="Deng Y."/>
            <person name="Ran L."/>
            <person name="Shi X."/>
            <person name="Wang X."/>
            <person name="Wu Q."/>
            <person name="Li C."/>
            <person name="Ren X."/>
            <person name="Wang J."/>
            <person name="Wang X."/>
            <person name="Li D."/>
            <person name="Liu D."/>
            <person name="Zhang X."/>
            <person name="Ji Z."/>
            <person name="Zhao W."/>
            <person name="Sun Y."/>
            <person name="Zhang Z."/>
            <person name="Bao J."/>
            <person name="Han Y."/>
            <person name="Dong L."/>
            <person name="Ji J."/>
            <person name="Chen P."/>
            <person name="Wu S."/>
            <person name="Liu J."/>
            <person name="Xiao Y."/>
            <person name="Bu D."/>
            <person name="Tan J."/>
            <person name="Yang L."/>
            <person name="Ye C."/>
            <person name="Zhang J."/>
            <person name="Xu J."/>
            <person name="Zhou Y."/>
            <person name="Yu Y."/>
            <person name="Zhang B."/>
            <person name="Zhuang S."/>
            <person name="Wei H."/>
            <person name="Liu B."/>
            <person name="Lei M."/>
            <person name="Yu H."/>
            <person name="Li Y."/>
            <person name="Xu H."/>
            <person name="Wei S."/>
            <person name="He X."/>
            <person name="Fang L."/>
            <person name="Zhang Z."/>
            <person name="Zhang Y."/>
            <person name="Huang X."/>
            <person name="Su Z."/>
            <person name="Tong W."/>
            <person name="Li J."/>
            <person name="Tong Z."/>
            <person name="Li S."/>
            <person name="Ye J."/>
            <person name="Wang L."/>
            <person name="Fang L."/>
            <person name="Lei T."/>
            <person name="Chen C.-S."/>
            <person name="Chen H.-C."/>
            <person name="Xu Z."/>
            <person name="Li H."/>
            <person name="Huang H."/>
            <person name="Zhang F."/>
            <person name="Xu H."/>
            <person name="Li N."/>
            <person name="Zhao C."/>
            <person name="Li S."/>
            <person name="Dong L."/>
            <person name="Huang Y."/>
            <person name="Li L."/>
            <person name="Xi Y."/>
            <person name="Qi Q."/>
            <person name="Li W."/>
            <person name="Zhang B."/>
            <person name="Hu W."/>
            <person name="Zhang Y."/>
            <person name="Tian X."/>
            <person name="Jiao Y."/>
            <person name="Liang X."/>
            <person name="Jin J."/>
            <person name="Gao L."/>
            <person name="Zheng W."/>
            <person name="Hao B."/>
            <person name="Liu S.-M."/>
            <person name="Wang W."/>
            <person name="Yuan L."/>
            <person name="Cao M."/>
            <person name="McDermott J."/>
            <person name="Samudrala R."/>
            <person name="Wang J."/>
            <person name="Wong G.K.-S."/>
            <person name="Yang H."/>
        </authorList>
    </citation>
    <scope>NUCLEOTIDE SEQUENCE [LARGE SCALE GENOMIC DNA]</scope>
    <source>
        <strain>cv. Nipponbare</strain>
    </source>
</reference>
<reference key="6">
    <citation type="journal article" date="2008" name="Mol. Plant Microbe Interact.">
        <title>Analysis of flagellin perception mediated by flg22 receptor OsFLS2 in rice.</title>
        <authorList>
            <person name="Takai R."/>
            <person name="Isogai A."/>
            <person name="Takayama S."/>
            <person name="Che F.S."/>
        </authorList>
    </citation>
    <scope>FUNCTION</scope>
</reference>
<reference key="7">
    <citation type="journal article" date="2012" name="Plant Cell">
        <title>HDT701, a histone H4 deacetylase, negatively regulates plant innate immunity by modulating histone H4 acetylation of defense-related genes in rice.</title>
        <authorList>
            <person name="Ding B."/>
            <person name="Bellizzi M.R."/>
            <person name="Ning Y."/>
            <person name="Meyers B.C."/>
            <person name="Wang G.L."/>
        </authorList>
    </citation>
    <scope>INDUCTION BY FLAGELLIN</scope>
</reference>
<reference key="8">
    <citation type="journal article" date="2014" name="Mol. Plant">
        <title>An XA21-associated kinase (OsSERK2) regulates immunity mediated by the XA21 and XA3 immune receptors.</title>
        <authorList>
            <person name="Chen X."/>
            <person name="Zuo S."/>
            <person name="Schwessinger B."/>
            <person name="Chern M."/>
            <person name="Canlas P.E."/>
            <person name="Ruan D."/>
            <person name="Zhou X."/>
            <person name="Wang J."/>
            <person name="Daudi A."/>
            <person name="Petzold C.J."/>
            <person name="Heazlewood J.L."/>
            <person name="Ronald P.C."/>
        </authorList>
    </citation>
    <scope>INTERACTION WITH SERK2</scope>
</reference>
<reference key="9">
    <citation type="journal article" date="2015" name="Mol. Plant">
        <title>Rice OsFLS2-mediated perception of bacterial flagellins is evaded by Xanthomonas oryzae pvs. oryzae and oryzicola.</title>
        <authorList>
            <person name="Wang S."/>
            <person name="Sun Z."/>
            <person name="Wang H."/>
            <person name="Liu L."/>
            <person name="Lu F."/>
            <person name="Yang J."/>
            <person name="Zhang M."/>
            <person name="Zhang S."/>
            <person name="Guo Z."/>
            <person name="Bent A.F."/>
            <person name="Sun W."/>
        </authorList>
    </citation>
    <scope>FUNCTION</scope>
</reference>
<organism>
    <name type="scientific">Oryza sativa subsp. japonica</name>
    <name type="common">Rice</name>
    <dbReference type="NCBI Taxonomy" id="39947"/>
    <lineage>
        <taxon>Eukaryota</taxon>
        <taxon>Viridiplantae</taxon>
        <taxon>Streptophyta</taxon>
        <taxon>Embryophyta</taxon>
        <taxon>Tracheophyta</taxon>
        <taxon>Spermatophyta</taxon>
        <taxon>Magnoliopsida</taxon>
        <taxon>Liliopsida</taxon>
        <taxon>Poales</taxon>
        <taxon>Poaceae</taxon>
        <taxon>BOP clade</taxon>
        <taxon>Oryzoideae</taxon>
        <taxon>Oryzeae</taxon>
        <taxon>Oryzinae</taxon>
        <taxon>Oryza</taxon>
        <taxon>Oryza sativa</taxon>
    </lineage>
</organism>
<gene>
    <name evidence="9" type="primary">FLS2</name>
    <name evidence="11" type="ordered locus">Os04g0618700</name>
    <name evidence="10" type="ordered locus">LOC_Os04g52780</name>
    <name evidence="12" type="ORF">OsJ_16186</name>
</gene>
<dbReference type="EC" id="2.7.11.1" evidence="10"/>
<dbReference type="EMBL" id="AL662970">
    <property type="protein sequence ID" value="CAE02151.2"/>
    <property type="status" value="ALT_INIT"/>
    <property type="molecule type" value="Genomic_DNA"/>
</dbReference>
<dbReference type="EMBL" id="AP008210">
    <property type="protein sequence ID" value="BAF15808.1"/>
    <property type="molecule type" value="Genomic_DNA"/>
</dbReference>
<dbReference type="EMBL" id="AP014960">
    <property type="protein sequence ID" value="BAS91038.1"/>
    <property type="molecule type" value="Genomic_DNA"/>
</dbReference>
<dbReference type="EMBL" id="CM000141">
    <property type="protein sequence ID" value="EAZ32006.1"/>
    <property type="status" value="ALT_INIT"/>
    <property type="molecule type" value="Genomic_DNA"/>
</dbReference>
<dbReference type="PDB" id="8JUP">
    <property type="method" value="X-ray"/>
    <property type="resolution" value="1.98 A"/>
    <property type="chains" value="A=859-1183"/>
</dbReference>
<dbReference type="PDB" id="8JUV">
    <property type="method" value="X-ray"/>
    <property type="resolution" value="2.09 A"/>
    <property type="chains" value="A=859-1183"/>
</dbReference>
<dbReference type="PDBsum" id="8JUP"/>
<dbReference type="PDBsum" id="8JUV"/>
<dbReference type="SMR" id="Q0JA29"/>
<dbReference type="FunCoup" id="Q0JA29">
    <property type="interactions" value="649"/>
</dbReference>
<dbReference type="STRING" id="39947.Q0JA29"/>
<dbReference type="GlyCosmos" id="Q0JA29">
    <property type="glycosylation" value="18 sites, No reported glycans"/>
</dbReference>
<dbReference type="PaxDb" id="39947-Q0JA29"/>
<dbReference type="EnsemblPlants" id="Os04t0618700-01">
    <property type="protein sequence ID" value="Os04t0618700-01"/>
    <property type="gene ID" value="Os04g0618700"/>
</dbReference>
<dbReference type="Gramene" id="Os04t0618700-01">
    <property type="protein sequence ID" value="Os04t0618700-01"/>
    <property type="gene ID" value="Os04g0618700"/>
</dbReference>
<dbReference type="KEGG" id="dosa:Os04g0618700"/>
<dbReference type="KEGG" id="osa:4337016"/>
<dbReference type="eggNOG" id="ENOG502QTTB">
    <property type="taxonomic scope" value="Eukaryota"/>
</dbReference>
<dbReference type="HOGENOM" id="CLU_000288_22_1_1"/>
<dbReference type="InParanoid" id="Q0JA29"/>
<dbReference type="OMA" id="ALPRHCN"/>
<dbReference type="OrthoDB" id="676979at2759"/>
<dbReference type="Proteomes" id="UP000000763">
    <property type="component" value="Chromosome 4"/>
</dbReference>
<dbReference type="Proteomes" id="UP000007752">
    <property type="component" value="Chromosome 4"/>
</dbReference>
<dbReference type="Proteomes" id="UP000059680">
    <property type="component" value="Chromosome 4"/>
</dbReference>
<dbReference type="GO" id="GO:0005768">
    <property type="term" value="C:endosome"/>
    <property type="evidence" value="ECO:0007669"/>
    <property type="project" value="EnsemblPlants"/>
</dbReference>
<dbReference type="GO" id="GO:0005886">
    <property type="term" value="C:plasma membrane"/>
    <property type="evidence" value="ECO:0000318"/>
    <property type="project" value="GO_Central"/>
</dbReference>
<dbReference type="GO" id="GO:0005524">
    <property type="term" value="F:ATP binding"/>
    <property type="evidence" value="ECO:0007669"/>
    <property type="project" value="UniProtKB-KW"/>
</dbReference>
<dbReference type="GO" id="GO:0042802">
    <property type="term" value="F:identical protein binding"/>
    <property type="evidence" value="ECO:0007669"/>
    <property type="project" value="EnsemblPlants"/>
</dbReference>
<dbReference type="GO" id="GO:0106310">
    <property type="term" value="F:protein serine kinase activity"/>
    <property type="evidence" value="ECO:0007669"/>
    <property type="project" value="RHEA"/>
</dbReference>
<dbReference type="GO" id="GO:0004674">
    <property type="term" value="F:protein serine/threonine kinase activity"/>
    <property type="evidence" value="ECO:0007669"/>
    <property type="project" value="UniProtKB-KW"/>
</dbReference>
<dbReference type="GO" id="GO:0052544">
    <property type="term" value="P:defense response by callose deposition in cell wall"/>
    <property type="evidence" value="ECO:0007669"/>
    <property type="project" value="EnsemblPlants"/>
</dbReference>
<dbReference type="GO" id="GO:0042742">
    <property type="term" value="P:defense response to bacterium"/>
    <property type="evidence" value="ECO:0007669"/>
    <property type="project" value="EnsemblPlants"/>
</dbReference>
<dbReference type="GO" id="GO:0016045">
    <property type="term" value="P:detection of bacterium"/>
    <property type="evidence" value="ECO:0007669"/>
    <property type="project" value="EnsemblPlants"/>
</dbReference>
<dbReference type="GO" id="GO:0006898">
    <property type="term" value="P:receptor-mediated endocytosis"/>
    <property type="evidence" value="ECO:0007669"/>
    <property type="project" value="EnsemblPlants"/>
</dbReference>
<dbReference type="FunFam" id="3.80.10.10:FF:000413">
    <property type="entry name" value="Inactive leucine-rich repeat receptor-like protein kinase"/>
    <property type="match status" value="1"/>
</dbReference>
<dbReference type="FunFam" id="3.80.10.10:FF:000288">
    <property type="entry name" value="LRR receptor-like serine/threonine-protein kinase EFR"/>
    <property type="match status" value="1"/>
</dbReference>
<dbReference type="FunFam" id="3.30.200.20:FF:001241">
    <property type="entry name" value="LRR receptor-like serine/threonine-protein kinase FLS2"/>
    <property type="match status" value="1"/>
</dbReference>
<dbReference type="FunFam" id="3.80.10.10:FF:000915">
    <property type="entry name" value="LRR receptor-like serine/threonine-protein kinase GSO1"/>
    <property type="match status" value="1"/>
</dbReference>
<dbReference type="FunFam" id="3.80.10.10:FF:000299">
    <property type="entry name" value="Piriformospora indica-insensitive protein 2"/>
    <property type="match status" value="1"/>
</dbReference>
<dbReference type="Gene3D" id="3.30.200.20">
    <property type="entry name" value="Phosphorylase Kinase, domain 1"/>
    <property type="match status" value="1"/>
</dbReference>
<dbReference type="Gene3D" id="3.80.10.10">
    <property type="entry name" value="Ribonuclease Inhibitor"/>
    <property type="match status" value="4"/>
</dbReference>
<dbReference type="Gene3D" id="1.10.510.10">
    <property type="entry name" value="Transferase(Phosphotransferase) domain 1"/>
    <property type="match status" value="1"/>
</dbReference>
<dbReference type="InterPro" id="IPR011009">
    <property type="entry name" value="Kinase-like_dom_sf"/>
</dbReference>
<dbReference type="InterPro" id="IPR001611">
    <property type="entry name" value="Leu-rich_rpt"/>
</dbReference>
<dbReference type="InterPro" id="IPR003591">
    <property type="entry name" value="Leu-rich_rpt_typical-subtyp"/>
</dbReference>
<dbReference type="InterPro" id="IPR032675">
    <property type="entry name" value="LRR_dom_sf"/>
</dbReference>
<dbReference type="InterPro" id="IPR013210">
    <property type="entry name" value="LRR_N_plant-typ"/>
</dbReference>
<dbReference type="InterPro" id="IPR000719">
    <property type="entry name" value="Prot_kinase_dom"/>
</dbReference>
<dbReference type="InterPro" id="IPR008271">
    <property type="entry name" value="Ser/Thr_kinase_AS"/>
</dbReference>
<dbReference type="PANTHER" id="PTHR27000">
    <property type="entry name" value="LEUCINE-RICH REPEAT RECEPTOR-LIKE PROTEIN KINASE FAMILY PROTEIN-RELATED"/>
    <property type="match status" value="1"/>
</dbReference>
<dbReference type="PANTHER" id="PTHR27000:SF616">
    <property type="entry name" value="LRR RECEPTOR-LIKE SERINE_THREONINE-PROTEIN KINASE FLS2"/>
    <property type="match status" value="1"/>
</dbReference>
<dbReference type="Pfam" id="PF00560">
    <property type="entry name" value="LRR_1"/>
    <property type="match status" value="13"/>
</dbReference>
<dbReference type="Pfam" id="PF13855">
    <property type="entry name" value="LRR_8"/>
    <property type="match status" value="2"/>
</dbReference>
<dbReference type="Pfam" id="PF08263">
    <property type="entry name" value="LRRNT_2"/>
    <property type="match status" value="1"/>
</dbReference>
<dbReference type="Pfam" id="PF00069">
    <property type="entry name" value="Pkinase"/>
    <property type="match status" value="1"/>
</dbReference>
<dbReference type="PRINTS" id="PR00019">
    <property type="entry name" value="LEURICHRPT"/>
</dbReference>
<dbReference type="SMART" id="SM00369">
    <property type="entry name" value="LRR_TYP"/>
    <property type="match status" value="15"/>
</dbReference>
<dbReference type="SMART" id="SM00220">
    <property type="entry name" value="S_TKc"/>
    <property type="match status" value="1"/>
</dbReference>
<dbReference type="SUPFAM" id="SSF52058">
    <property type="entry name" value="L domain-like"/>
    <property type="match status" value="2"/>
</dbReference>
<dbReference type="SUPFAM" id="SSF56112">
    <property type="entry name" value="Protein kinase-like (PK-like)"/>
    <property type="match status" value="1"/>
</dbReference>
<dbReference type="SUPFAM" id="SSF52047">
    <property type="entry name" value="RNI-like"/>
    <property type="match status" value="1"/>
</dbReference>
<dbReference type="PROSITE" id="PS50011">
    <property type="entry name" value="PROTEIN_KINASE_DOM"/>
    <property type="match status" value="1"/>
</dbReference>
<dbReference type="PROSITE" id="PS00108">
    <property type="entry name" value="PROTEIN_KINASE_ST"/>
    <property type="match status" value="1"/>
</dbReference>
<accession>Q0JA29</accession>
<accession>A3AXG7</accession>
<accession>Q7XS37</accession>
<comment type="function">
    <text evidence="5 8">Constitutes the pattern-recognition receptor (PPR) that determines the specific perception of flagellin (flg22), a potent elicitor of the defense response to pathogen-associated molecular patterns (PAMPs). Recognizes flg22 from Pseudomonas aeruginosa and Acidovorax avenae. flg22 is a peptide derived from the bacterial flagellin N-terminus sequence (PubMed:18986259, PubMed:25617720). Does not recognize flg22 from Xanthomonas oryzae pv. oryzae (Xoo) or Xanthomonas oryzae pv. oryzicola (Xoc) (PubMed:25617720).</text>
</comment>
<comment type="catalytic activity">
    <reaction>
        <text>L-seryl-[protein] + ATP = O-phospho-L-seryl-[protein] + ADP + H(+)</text>
        <dbReference type="Rhea" id="RHEA:17989"/>
        <dbReference type="Rhea" id="RHEA-COMP:9863"/>
        <dbReference type="Rhea" id="RHEA-COMP:11604"/>
        <dbReference type="ChEBI" id="CHEBI:15378"/>
        <dbReference type="ChEBI" id="CHEBI:29999"/>
        <dbReference type="ChEBI" id="CHEBI:30616"/>
        <dbReference type="ChEBI" id="CHEBI:83421"/>
        <dbReference type="ChEBI" id="CHEBI:456216"/>
        <dbReference type="EC" id="2.7.11.1"/>
    </reaction>
</comment>
<comment type="catalytic activity">
    <reaction>
        <text>L-threonyl-[protein] + ATP = O-phospho-L-threonyl-[protein] + ADP + H(+)</text>
        <dbReference type="Rhea" id="RHEA:46608"/>
        <dbReference type="Rhea" id="RHEA-COMP:11060"/>
        <dbReference type="Rhea" id="RHEA-COMP:11605"/>
        <dbReference type="ChEBI" id="CHEBI:15378"/>
        <dbReference type="ChEBI" id="CHEBI:30013"/>
        <dbReference type="ChEBI" id="CHEBI:30616"/>
        <dbReference type="ChEBI" id="CHEBI:61977"/>
        <dbReference type="ChEBI" id="CHEBI:456216"/>
        <dbReference type="EC" id="2.7.11.1"/>
    </reaction>
</comment>
<comment type="subunit">
    <text evidence="7">Interacts with SERK2.</text>
</comment>
<comment type="subcellular location">
    <subcellularLocation>
        <location evidence="10">Cell membrane</location>
        <topology evidence="2">Single-pass membrane protein</topology>
    </subcellularLocation>
</comment>
<comment type="induction">
    <text evidence="6">Induced by flagellin (flg22).</text>
</comment>
<comment type="similarity">
    <text evidence="3">Belongs to the protein kinase superfamily. Ser/Thr protein kinase family.</text>
</comment>
<comment type="sequence caution" evidence="10">
    <conflict type="erroneous initiation">
        <sequence resource="EMBL-CDS" id="CAE02151"/>
    </conflict>
    <text>Truncated N-terminus.</text>
</comment>
<comment type="sequence caution" evidence="10">
    <conflict type="erroneous initiation">
        <sequence resource="EMBL-CDS" id="EAZ32006"/>
    </conflict>
    <text>Truncated N-terminus.</text>
</comment>
<protein>
    <recommendedName>
        <fullName evidence="10">LRR receptor-like serine/threonine-protein kinase FLS2</fullName>
        <ecNumber evidence="10">2.7.11.1</ecNumber>
    </recommendedName>
    <alternativeName>
        <fullName evidence="10">Protein FLAGELLIN-SENSING 2 homolog</fullName>
        <shortName evidence="9">OsFLS2</shortName>
    </alternativeName>
    <alternativeName>
        <fullName evidence="10">Protein FLAGELLIN-SENSITIVE 2 homolog</fullName>
    </alternativeName>
</protein>
<sequence length="1183" mass="124752">MERNKFASKMSQHYTKTICIAVVLVAVLFSLSSAAAAGSGAAVSVQLEALLEFKNGVADDPLGVLAGWRVGKSGDGAVRGGALPRHCNWTGVACDGAGQVTSIQLPESKLRGALSPFLGNISTLQVIDLTSNAFAGGIPPQLGRLGELEQLVVSSNYFAGGIPSSLCNCSAMWALALNVNNLTGAIPSCIGDLSNLEIFEAYLNNLDGELPPSMAKLKGIMVVDLSCNQLSGSIPPEIGDLSNLQILQLYENRFSGHIPRELGRCKNLTLLNIFSNGFTGEIPGELGELTNLEVMRLYKNALTSEIPRSLRRCVSLLNLDLSMNQLAGPIPPELGELPSLQRLSLHANRLAGTVPASLTNLVNLTILELSENHLSGPLPASIGSLRNLRRLIVQNNSLSGQIPASISNCTQLANASMSFNLFSGPLPAGLGRLQSLMFLSLGQNSLAGDIPDDLFDCGQLQKLDLSENSFTGGLSRLVGQLGNLTVLQLQGNALSGEIPEEIGNMTKLISLKLGRNRFAGHVPASISNMSSLQLLDLGHNRLDGVFPAEVFELRQLTILGAGSNRFAGPIPDAVANLRSLSFLDLSSNMLNGTVPAALGRLDQLLTLDLSHNRLAGAIPGAVIASMSNVQMYLNLSNNAFTGAIPAEIGGLVMVQTIDLSNNQLSGGVPATLAGCKNLYSLDLSGNSLTGELPANLFPQLDLLTTLNISGNDLDGEIPADIAALKHIQTLDVSRNAFAGAIPPALANLTALRSLNLSSNTFEGPVPDGGVFRNLTMSSLQGNAGLCGGKLLAPCHGHAAGKKRVFSRTGLVILVVLIALSTLLLLMVATILLVSYRRYRRKRRAADIAGDSPEAAVVVPELRRFSYGQLAAATNSFDQGNVIGSSNLSTVYKGVLAGDADGGMVVAVKRLNLEQFPSKSDKCFLTELATLSRLRHKNLARVVGYAWEAGKIKALVLDYMVNGDLDGAIHGGAAAPPPAPSRWTVRERLRVCVSVAHGLVYLHSGYDFPVVHCDVKPSNVLLDGDWEARVSDFGTARMLGVHLPAAANAAAQSTATSSAFRGTVGYMAPEFAYMRTVSTKVDVFSFGVLAMELFTGRRPTGTIEEDGVPLTLQQLVDNAVSRGLDGVHAVLDPRMKVATEADLSTAADVLAVALSCAAFEPADRPDMGAVLSSLLKMSKLVGED</sequence>